<reference key="1">
    <citation type="journal article" date="2008" name="J. Bacteriol.">
        <title>Insights into the environmental resistance gene pool from the genome sequence of the multidrug-resistant environmental isolate Escherichia coli SMS-3-5.</title>
        <authorList>
            <person name="Fricke W.F."/>
            <person name="Wright M.S."/>
            <person name="Lindell A.H."/>
            <person name="Harkins D.M."/>
            <person name="Baker-Austin C."/>
            <person name="Ravel J."/>
            <person name="Stepanauskas R."/>
        </authorList>
    </citation>
    <scope>NUCLEOTIDE SEQUENCE [LARGE SCALE GENOMIC DNA]</scope>
    <source>
        <strain>SMS-3-5 / SECEC</strain>
    </source>
</reference>
<gene>
    <name evidence="1" type="primary">hisC</name>
    <name type="ordered locus">EcSMS35_1039</name>
</gene>
<evidence type="ECO:0000255" key="1">
    <source>
        <dbReference type="HAMAP-Rule" id="MF_01023"/>
    </source>
</evidence>
<feature type="chain" id="PRO_1000135398" description="Histidinol-phosphate aminotransferase">
    <location>
        <begin position="1"/>
        <end position="356"/>
    </location>
</feature>
<feature type="modified residue" description="N6-(pyridoxal phosphate)lysine" evidence="1">
    <location>
        <position position="214"/>
    </location>
</feature>
<keyword id="KW-0028">Amino-acid biosynthesis</keyword>
<keyword id="KW-0032">Aminotransferase</keyword>
<keyword id="KW-0368">Histidine biosynthesis</keyword>
<keyword id="KW-0663">Pyridoxal phosphate</keyword>
<keyword id="KW-0808">Transferase</keyword>
<accession>B1LP20</accession>
<dbReference type="EC" id="2.6.1.9" evidence="1"/>
<dbReference type="EMBL" id="CP000970">
    <property type="protein sequence ID" value="ACB19219.1"/>
    <property type="molecule type" value="Genomic_DNA"/>
</dbReference>
<dbReference type="RefSeq" id="WP_000108926.1">
    <property type="nucleotide sequence ID" value="NC_010498.1"/>
</dbReference>
<dbReference type="SMR" id="B1LP20"/>
<dbReference type="KEGG" id="ecm:EcSMS35_1039"/>
<dbReference type="HOGENOM" id="CLU_017584_3_1_6"/>
<dbReference type="UniPathway" id="UPA00031">
    <property type="reaction ID" value="UER00012"/>
</dbReference>
<dbReference type="Proteomes" id="UP000007011">
    <property type="component" value="Chromosome"/>
</dbReference>
<dbReference type="GO" id="GO:0004400">
    <property type="term" value="F:histidinol-phosphate transaminase activity"/>
    <property type="evidence" value="ECO:0007669"/>
    <property type="project" value="UniProtKB-UniRule"/>
</dbReference>
<dbReference type="GO" id="GO:0030170">
    <property type="term" value="F:pyridoxal phosphate binding"/>
    <property type="evidence" value="ECO:0007669"/>
    <property type="project" value="InterPro"/>
</dbReference>
<dbReference type="GO" id="GO:0000105">
    <property type="term" value="P:L-histidine biosynthetic process"/>
    <property type="evidence" value="ECO:0007669"/>
    <property type="project" value="UniProtKB-UniRule"/>
</dbReference>
<dbReference type="CDD" id="cd00609">
    <property type="entry name" value="AAT_like"/>
    <property type="match status" value="1"/>
</dbReference>
<dbReference type="FunFam" id="3.40.640.10:FF:000032">
    <property type="entry name" value="Histidinol-phosphate aminotransferase"/>
    <property type="match status" value="1"/>
</dbReference>
<dbReference type="FunFam" id="3.90.1150.10:FF:000042">
    <property type="entry name" value="Histidinol-phosphate aminotransferase"/>
    <property type="match status" value="1"/>
</dbReference>
<dbReference type="Gene3D" id="3.90.1150.10">
    <property type="entry name" value="Aspartate Aminotransferase, domain 1"/>
    <property type="match status" value="1"/>
</dbReference>
<dbReference type="Gene3D" id="3.40.640.10">
    <property type="entry name" value="Type I PLP-dependent aspartate aminotransferase-like (Major domain)"/>
    <property type="match status" value="1"/>
</dbReference>
<dbReference type="HAMAP" id="MF_01023">
    <property type="entry name" value="HisC_aminotrans_2"/>
    <property type="match status" value="1"/>
</dbReference>
<dbReference type="InterPro" id="IPR001917">
    <property type="entry name" value="Aminotrans_II_pyridoxalP_BS"/>
</dbReference>
<dbReference type="InterPro" id="IPR004839">
    <property type="entry name" value="Aminotransferase_I/II_large"/>
</dbReference>
<dbReference type="InterPro" id="IPR005861">
    <property type="entry name" value="HisP_aminotrans"/>
</dbReference>
<dbReference type="InterPro" id="IPR015424">
    <property type="entry name" value="PyrdxlP-dep_Trfase"/>
</dbReference>
<dbReference type="InterPro" id="IPR015421">
    <property type="entry name" value="PyrdxlP-dep_Trfase_major"/>
</dbReference>
<dbReference type="InterPro" id="IPR015422">
    <property type="entry name" value="PyrdxlP-dep_Trfase_small"/>
</dbReference>
<dbReference type="NCBIfam" id="TIGR01141">
    <property type="entry name" value="hisC"/>
    <property type="match status" value="1"/>
</dbReference>
<dbReference type="PANTHER" id="PTHR42885:SF2">
    <property type="entry name" value="HISTIDINOL-PHOSPHATE AMINOTRANSFERASE"/>
    <property type="match status" value="1"/>
</dbReference>
<dbReference type="PANTHER" id="PTHR42885">
    <property type="entry name" value="HISTIDINOL-PHOSPHATE AMINOTRANSFERASE-RELATED"/>
    <property type="match status" value="1"/>
</dbReference>
<dbReference type="Pfam" id="PF00155">
    <property type="entry name" value="Aminotran_1_2"/>
    <property type="match status" value="1"/>
</dbReference>
<dbReference type="SUPFAM" id="SSF53383">
    <property type="entry name" value="PLP-dependent transferases"/>
    <property type="match status" value="1"/>
</dbReference>
<dbReference type="PROSITE" id="PS00599">
    <property type="entry name" value="AA_TRANSFER_CLASS_2"/>
    <property type="match status" value="1"/>
</dbReference>
<name>HIS8_ECOSM</name>
<protein>
    <recommendedName>
        <fullName evidence="1">Histidinol-phosphate aminotransferase</fullName>
        <ecNumber evidence="1">2.6.1.9</ecNumber>
    </recommendedName>
    <alternativeName>
        <fullName evidence="1">Imidazole acetol-phosphate transaminase</fullName>
    </alternativeName>
</protein>
<sequence length="356" mass="39365">MSTVTITDLARENVRNLTPYQSARRLGGNGDVWLNANEYPTAVEFQLTQQTLNRYPECQPKAVIENYAQYAGVKAEQVLVSRGADEGIELLIRAFCEPGKDAILYCPPTYGMYSVSAETIGVECRTVPTLKNWQLDLQGISDKLDGVKVVYVCSPNNPTGQLINPQDFRTLLELTRGKAIVVADEAYIEFCPQASLAGWLAEYPHLAILRTLSKAFALAGLRCGFTLANEEVINLLMKVIAPYPLSTPVADIAAQALSPQGIVAMRERVAQIIAEREYLMAALKEIPCVEQVFDSETNYILARFKASSAVFKSLWDQGIILRDQNKQPSLSGCLRITVGTREESQRVIDALRAEQV</sequence>
<comment type="catalytic activity">
    <reaction evidence="1">
        <text>L-histidinol phosphate + 2-oxoglutarate = 3-(imidazol-4-yl)-2-oxopropyl phosphate + L-glutamate</text>
        <dbReference type="Rhea" id="RHEA:23744"/>
        <dbReference type="ChEBI" id="CHEBI:16810"/>
        <dbReference type="ChEBI" id="CHEBI:29985"/>
        <dbReference type="ChEBI" id="CHEBI:57766"/>
        <dbReference type="ChEBI" id="CHEBI:57980"/>
        <dbReference type="EC" id="2.6.1.9"/>
    </reaction>
</comment>
<comment type="cofactor">
    <cofactor evidence="1">
        <name>pyridoxal 5'-phosphate</name>
        <dbReference type="ChEBI" id="CHEBI:597326"/>
    </cofactor>
</comment>
<comment type="pathway">
    <text evidence="1">Amino-acid biosynthesis; L-histidine biosynthesis; L-histidine from 5-phospho-alpha-D-ribose 1-diphosphate: step 7/9.</text>
</comment>
<comment type="subunit">
    <text evidence="1">Homodimer.</text>
</comment>
<comment type="similarity">
    <text evidence="1">Belongs to the class-II pyridoxal-phosphate-dependent aminotransferase family. Histidinol-phosphate aminotransferase subfamily.</text>
</comment>
<organism>
    <name type="scientific">Escherichia coli (strain SMS-3-5 / SECEC)</name>
    <dbReference type="NCBI Taxonomy" id="439855"/>
    <lineage>
        <taxon>Bacteria</taxon>
        <taxon>Pseudomonadati</taxon>
        <taxon>Pseudomonadota</taxon>
        <taxon>Gammaproteobacteria</taxon>
        <taxon>Enterobacterales</taxon>
        <taxon>Enterobacteriaceae</taxon>
        <taxon>Escherichia</taxon>
    </lineage>
</organism>
<proteinExistence type="inferred from homology"/>